<sequence>MIDKTAFIHPSSIVEEGAIIGAGVYIGPFCIVGSQVEIGAGTELKSHVVVNGITKIGCDNQIYQFASIGEANQDLKYAGEPTRVEVGDRNRIRESVTIHRGTTQGGGVTKVGCDNLLMVNTHVAHDCVIGNRCILANNAALGGHVEIDDYAIIGGMTAIHQFCVIGAHVMVGGCSGITQDVPPFVIAQGNHATPFGINIEGLKRRGFDKESLHAIRSAYKLLYRSGRTLDEVKPEIAELAEQYPVVKAFNDFFARSTRGIIR</sequence>
<evidence type="ECO:0000255" key="1">
    <source>
        <dbReference type="HAMAP-Rule" id="MF_00387"/>
    </source>
</evidence>
<accession>A9R384</accession>
<gene>
    <name evidence="1" type="primary">lpxA</name>
    <name type="ordered locus">YpAngola_A3423</name>
</gene>
<dbReference type="EC" id="2.3.1.129" evidence="1"/>
<dbReference type="EMBL" id="CP000901">
    <property type="protein sequence ID" value="ABX86079.1"/>
    <property type="molecule type" value="Genomic_DNA"/>
</dbReference>
<dbReference type="RefSeq" id="WP_002212143.1">
    <property type="nucleotide sequence ID" value="NZ_CP009935.1"/>
</dbReference>
<dbReference type="SMR" id="A9R384"/>
<dbReference type="GeneID" id="57977505"/>
<dbReference type="KEGG" id="ypg:YpAngola_A3423"/>
<dbReference type="PATRIC" id="fig|349746.12.peg.118"/>
<dbReference type="UniPathway" id="UPA00359">
    <property type="reaction ID" value="UER00477"/>
</dbReference>
<dbReference type="GO" id="GO:0005737">
    <property type="term" value="C:cytoplasm"/>
    <property type="evidence" value="ECO:0007669"/>
    <property type="project" value="UniProtKB-SubCell"/>
</dbReference>
<dbReference type="GO" id="GO:0016020">
    <property type="term" value="C:membrane"/>
    <property type="evidence" value="ECO:0007669"/>
    <property type="project" value="GOC"/>
</dbReference>
<dbReference type="GO" id="GO:0008780">
    <property type="term" value="F:acyl-[acyl-carrier-protein]-UDP-N-acetylglucosamine O-acyltransferase activity"/>
    <property type="evidence" value="ECO:0007669"/>
    <property type="project" value="UniProtKB-UniRule"/>
</dbReference>
<dbReference type="GO" id="GO:0009245">
    <property type="term" value="P:lipid A biosynthetic process"/>
    <property type="evidence" value="ECO:0007669"/>
    <property type="project" value="UniProtKB-UniRule"/>
</dbReference>
<dbReference type="CDD" id="cd03351">
    <property type="entry name" value="LbH_UDP-GlcNAc_AT"/>
    <property type="match status" value="1"/>
</dbReference>
<dbReference type="FunFam" id="1.20.1180.10:FF:000001">
    <property type="entry name" value="Acyl-[acyl-carrier-protein]--UDP-N-acetylglucosamine O-acyltransferase"/>
    <property type="match status" value="1"/>
</dbReference>
<dbReference type="FunFam" id="2.160.10.10:FF:000003">
    <property type="entry name" value="Acyl-[acyl-carrier-protein]--UDP-N-acetylglucosamine O-acyltransferase"/>
    <property type="match status" value="1"/>
</dbReference>
<dbReference type="Gene3D" id="2.160.10.10">
    <property type="entry name" value="Hexapeptide repeat proteins"/>
    <property type="match status" value="1"/>
</dbReference>
<dbReference type="Gene3D" id="1.20.1180.10">
    <property type="entry name" value="Udp N-acetylglucosamine O-acyltransferase, C-terminal domain"/>
    <property type="match status" value="1"/>
</dbReference>
<dbReference type="HAMAP" id="MF_00387">
    <property type="entry name" value="LpxA"/>
    <property type="match status" value="1"/>
</dbReference>
<dbReference type="InterPro" id="IPR029098">
    <property type="entry name" value="Acetyltransf_C"/>
</dbReference>
<dbReference type="InterPro" id="IPR037157">
    <property type="entry name" value="Acetyltransf_C_sf"/>
</dbReference>
<dbReference type="InterPro" id="IPR001451">
    <property type="entry name" value="Hexapep"/>
</dbReference>
<dbReference type="InterPro" id="IPR018357">
    <property type="entry name" value="Hexapep_transf_CS"/>
</dbReference>
<dbReference type="InterPro" id="IPR010137">
    <property type="entry name" value="Lipid_A_LpxA"/>
</dbReference>
<dbReference type="InterPro" id="IPR011004">
    <property type="entry name" value="Trimer_LpxA-like_sf"/>
</dbReference>
<dbReference type="NCBIfam" id="TIGR01852">
    <property type="entry name" value="lipid_A_lpxA"/>
    <property type="match status" value="1"/>
</dbReference>
<dbReference type="NCBIfam" id="NF003657">
    <property type="entry name" value="PRK05289.1"/>
    <property type="match status" value="1"/>
</dbReference>
<dbReference type="PANTHER" id="PTHR43480">
    <property type="entry name" value="ACYL-[ACYL-CARRIER-PROTEIN]--UDP-N-ACETYLGLUCOSAMINE O-ACYLTRANSFERASE"/>
    <property type="match status" value="1"/>
</dbReference>
<dbReference type="PANTHER" id="PTHR43480:SF1">
    <property type="entry name" value="ACYL-[ACYL-CARRIER-PROTEIN]--UDP-N-ACETYLGLUCOSAMINE O-ACYLTRANSFERASE, MITOCHONDRIAL-RELATED"/>
    <property type="match status" value="1"/>
</dbReference>
<dbReference type="Pfam" id="PF13720">
    <property type="entry name" value="Acetyltransf_11"/>
    <property type="match status" value="1"/>
</dbReference>
<dbReference type="Pfam" id="PF00132">
    <property type="entry name" value="Hexapep"/>
    <property type="match status" value="2"/>
</dbReference>
<dbReference type="PIRSF" id="PIRSF000456">
    <property type="entry name" value="UDP-GlcNAc_acltr"/>
    <property type="match status" value="1"/>
</dbReference>
<dbReference type="SUPFAM" id="SSF51161">
    <property type="entry name" value="Trimeric LpxA-like enzymes"/>
    <property type="match status" value="1"/>
</dbReference>
<dbReference type="PROSITE" id="PS00101">
    <property type="entry name" value="HEXAPEP_TRANSFERASES"/>
    <property type="match status" value="2"/>
</dbReference>
<keyword id="KW-0012">Acyltransferase</keyword>
<keyword id="KW-0963">Cytoplasm</keyword>
<keyword id="KW-0441">Lipid A biosynthesis</keyword>
<keyword id="KW-0444">Lipid biosynthesis</keyword>
<keyword id="KW-0443">Lipid metabolism</keyword>
<keyword id="KW-0677">Repeat</keyword>
<keyword id="KW-0808">Transferase</keyword>
<reference key="1">
    <citation type="journal article" date="2010" name="J. Bacteriol.">
        <title>Genome sequence of the deep-rooted Yersinia pestis strain Angola reveals new insights into the evolution and pangenome of the plague bacterium.</title>
        <authorList>
            <person name="Eppinger M."/>
            <person name="Worsham P.L."/>
            <person name="Nikolich M.P."/>
            <person name="Riley D.R."/>
            <person name="Sebastian Y."/>
            <person name="Mou S."/>
            <person name="Achtman M."/>
            <person name="Lindler L.E."/>
            <person name="Ravel J."/>
        </authorList>
    </citation>
    <scope>NUCLEOTIDE SEQUENCE [LARGE SCALE GENOMIC DNA]</scope>
    <source>
        <strain>Angola</strain>
    </source>
</reference>
<name>LPXA_YERPG</name>
<protein>
    <recommendedName>
        <fullName evidence="1">Acyl-[acyl-carrier-protein]--UDP-N-acetylglucosamine O-acyltransferase</fullName>
        <shortName evidence="1">UDP-N-acetylglucosamine acyltransferase</shortName>
        <ecNumber evidence="1">2.3.1.129</ecNumber>
    </recommendedName>
</protein>
<comment type="function">
    <text evidence="1">Involved in the biosynthesis of lipid A, a phosphorylated glycolipid that anchors the lipopolysaccharide to the outer membrane of the cell.</text>
</comment>
<comment type="catalytic activity">
    <reaction evidence="1">
        <text>a (3R)-hydroxyacyl-[ACP] + UDP-N-acetyl-alpha-D-glucosamine = a UDP-3-O-[(3R)-3-hydroxyacyl]-N-acetyl-alpha-D-glucosamine + holo-[ACP]</text>
        <dbReference type="Rhea" id="RHEA:67812"/>
        <dbReference type="Rhea" id="RHEA-COMP:9685"/>
        <dbReference type="Rhea" id="RHEA-COMP:9945"/>
        <dbReference type="ChEBI" id="CHEBI:57705"/>
        <dbReference type="ChEBI" id="CHEBI:64479"/>
        <dbReference type="ChEBI" id="CHEBI:78827"/>
        <dbReference type="ChEBI" id="CHEBI:173225"/>
        <dbReference type="EC" id="2.3.1.129"/>
    </reaction>
</comment>
<comment type="pathway">
    <text evidence="1">Glycolipid biosynthesis; lipid IV(A) biosynthesis; lipid IV(A) from (3R)-3-hydroxytetradecanoyl-[acyl-carrier-protein] and UDP-N-acetyl-alpha-D-glucosamine: step 1/6.</text>
</comment>
<comment type="subunit">
    <text evidence="1">Homotrimer.</text>
</comment>
<comment type="subcellular location">
    <subcellularLocation>
        <location evidence="1">Cytoplasm</location>
    </subcellularLocation>
</comment>
<comment type="similarity">
    <text evidence="1">Belongs to the transferase hexapeptide repeat family. LpxA subfamily.</text>
</comment>
<feature type="chain" id="PRO_1000190869" description="Acyl-[acyl-carrier-protein]--UDP-N-acetylglucosamine O-acyltransferase">
    <location>
        <begin position="1"/>
        <end position="262"/>
    </location>
</feature>
<organism>
    <name type="scientific">Yersinia pestis bv. Antiqua (strain Angola)</name>
    <dbReference type="NCBI Taxonomy" id="349746"/>
    <lineage>
        <taxon>Bacteria</taxon>
        <taxon>Pseudomonadati</taxon>
        <taxon>Pseudomonadota</taxon>
        <taxon>Gammaproteobacteria</taxon>
        <taxon>Enterobacterales</taxon>
        <taxon>Yersiniaceae</taxon>
        <taxon>Yersinia</taxon>
    </lineage>
</organism>
<proteinExistence type="inferred from homology"/>